<keyword id="KW-1185">Reference proteome</keyword>
<keyword id="KW-0964">Secreted</keyword>
<keyword id="KW-0732">Signal</keyword>
<organism>
    <name type="scientific">Dictyostelium discoideum</name>
    <name type="common">Social amoeba</name>
    <dbReference type="NCBI Taxonomy" id="44689"/>
    <lineage>
        <taxon>Eukaryota</taxon>
        <taxon>Amoebozoa</taxon>
        <taxon>Evosea</taxon>
        <taxon>Eumycetozoa</taxon>
        <taxon>Dictyostelia</taxon>
        <taxon>Dictyosteliales</taxon>
        <taxon>Dictyosteliaceae</taxon>
        <taxon>Dictyostelium</taxon>
    </lineage>
</organism>
<feature type="signal peptide" evidence="1">
    <location>
        <begin position="1"/>
        <end position="24"/>
    </location>
</feature>
<feature type="chain" id="PRO_0000388783" description="Putative uncharacterized protein DDB_G0289443">
    <location>
        <begin position="25"/>
        <end position="79"/>
    </location>
</feature>
<feature type="domain" description="LysM" evidence="2">
    <location>
        <begin position="32"/>
        <end position="78"/>
    </location>
</feature>
<evidence type="ECO:0000255" key="1"/>
<evidence type="ECO:0000255" key="2">
    <source>
        <dbReference type="PROSITE-ProRule" id="PRU01118"/>
    </source>
</evidence>
<evidence type="ECO:0000305" key="3"/>
<comment type="subcellular location">
    <subcellularLocation>
        <location evidence="3">Secreted</location>
    </subcellularLocation>
</comment>
<sequence length="79" mass="8846">MNKFLNLIGLAFVLVLCAFSCSNAEEMGSCSSWHVAQKGYTCYDMATSCKVTLDQFMRTNKLDNNACKLVQIGRKYCCN</sequence>
<dbReference type="EMBL" id="AAFI02000141">
    <property type="protein sequence ID" value="EAL62720.1"/>
    <property type="molecule type" value="Genomic_DNA"/>
</dbReference>
<dbReference type="RefSeq" id="XP_636223.1">
    <property type="nucleotide sequence ID" value="XM_631131.1"/>
</dbReference>
<dbReference type="PaxDb" id="44689-DDB0231106"/>
<dbReference type="EnsemblProtists" id="EAL62720">
    <property type="protein sequence ID" value="EAL62720"/>
    <property type="gene ID" value="DDB_G0289443"/>
</dbReference>
<dbReference type="GeneID" id="8627142"/>
<dbReference type="KEGG" id="ddi:DDB_G0289443"/>
<dbReference type="dictyBase" id="DDB_G0289443"/>
<dbReference type="VEuPathDB" id="AmoebaDB:DDB_G0289443"/>
<dbReference type="HOGENOM" id="CLU_197093_0_0_1"/>
<dbReference type="InParanoid" id="Q54HI1"/>
<dbReference type="PhylomeDB" id="Q54HI1"/>
<dbReference type="PRO" id="PR:Q54HI1"/>
<dbReference type="Proteomes" id="UP000002195">
    <property type="component" value="Chromosome 5"/>
</dbReference>
<dbReference type="GO" id="GO:0005576">
    <property type="term" value="C:extracellular region"/>
    <property type="evidence" value="ECO:0007669"/>
    <property type="project" value="UniProtKB-SubCell"/>
</dbReference>
<dbReference type="CDD" id="cd00118">
    <property type="entry name" value="LysM"/>
    <property type="match status" value="1"/>
</dbReference>
<dbReference type="Gene3D" id="3.10.350.10">
    <property type="entry name" value="LysM domain"/>
    <property type="match status" value="1"/>
</dbReference>
<dbReference type="InterPro" id="IPR018392">
    <property type="entry name" value="LysM_dom"/>
</dbReference>
<dbReference type="InterPro" id="IPR036779">
    <property type="entry name" value="LysM_dom_sf"/>
</dbReference>
<dbReference type="Pfam" id="PF01476">
    <property type="entry name" value="LysM"/>
    <property type="match status" value="1"/>
</dbReference>
<dbReference type="SUPFAM" id="SSF54106">
    <property type="entry name" value="LysM domain"/>
    <property type="match status" value="1"/>
</dbReference>
<dbReference type="PROSITE" id="PS51782">
    <property type="entry name" value="LYSM"/>
    <property type="match status" value="1"/>
</dbReference>
<proteinExistence type="inferred from homology"/>
<name>Y9443_DICDI</name>
<protein>
    <recommendedName>
        <fullName>Putative uncharacterized protein DDB_G0289443</fullName>
    </recommendedName>
</protein>
<gene>
    <name type="ORF">DDB_G0289443</name>
</gene>
<accession>Q54HI1</accession>
<reference key="1">
    <citation type="journal article" date="2005" name="Nature">
        <title>The genome of the social amoeba Dictyostelium discoideum.</title>
        <authorList>
            <person name="Eichinger L."/>
            <person name="Pachebat J.A."/>
            <person name="Gloeckner G."/>
            <person name="Rajandream M.A."/>
            <person name="Sucgang R."/>
            <person name="Berriman M."/>
            <person name="Song J."/>
            <person name="Olsen R."/>
            <person name="Szafranski K."/>
            <person name="Xu Q."/>
            <person name="Tunggal B."/>
            <person name="Kummerfeld S."/>
            <person name="Madera M."/>
            <person name="Konfortov B.A."/>
            <person name="Rivero F."/>
            <person name="Bankier A.T."/>
            <person name="Lehmann R."/>
            <person name="Hamlin N."/>
            <person name="Davies R."/>
            <person name="Gaudet P."/>
            <person name="Fey P."/>
            <person name="Pilcher K."/>
            <person name="Chen G."/>
            <person name="Saunders D."/>
            <person name="Sodergren E.J."/>
            <person name="Davis P."/>
            <person name="Kerhornou A."/>
            <person name="Nie X."/>
            <person name="Hall N."/>
            <person name="Anjard C."/>
            <person name="Hemphill L."/>
            <person name="Bason N."/>
            <person name="Farbrother P."/>
            <person name="Desany B."/>
            <person name="Just E."/>
            <person name="Morio T."/>
            <person name="Rost R."/>
            <person name="Churcher C.M."/>
            <person name="Cooper J."/>
            <person name="Haydock S."/>
            <person name="van Driessche N."/>
            <person name="Cronin A."/>
            <person name="Goodhead I."/>
            <person name="Muzny D.M."/>
            <person name="Mourier T."/>
            <person name="Pain A."/>
            <person name="Lu M."/>
            <person name="Harper D."/>
            <person name="Lindsay R."/>
            <person name="Hauser H."/>
            <person name="James K.D."/>
            <person name="Quiles M."/>
            <person name="Madan Babu M."/>
            <person name="Saito T."/>
            <person name="Buchrieser C."/>
            <person name="Wardroper A."/>
            <person name="Felder M."/>
            <person name="Thangavelu M."/>
            <person name="Johnson D."/>
            <person name="Knights A."/>
            <person name="Loulseged H."/>
            <person name="Mungall K.L."/>
            <person name="Oliver K."/>
            <person name="Price C."/>
            <person name="Quail M.A."/>
            <person name="Urushihara H."/>
            <person name="Hernandez J."/>
            <person name="Rabbinowitsch E."/>
            <person name="Steffen D."/>
            <person name="Sanders M."/>
            <person name="Ma J."/>
            <person name="Kohara Y."/>
            <person name="Sharp S."/>
            <person name="Simmonds M.N."/>
            <person name="Spiegler S."/>
            <person name="Tivey A."/>
            <person name="Sugano S."/>
            <person name="White B."/>
            <person name="Walker D."/>
            <person name="Woodward J.R."/>
            <person name="Winckler T."/>
            <person name="Tanaka Y."/>
            <person name="Shaulsky G."/>
            <person name="Schleicher M."/>
            <person name="Weinstock G.M."/>
            <person name="Rosenthal A."/>
            <person name="Cox E.C."/>
            <person name="Chisholm R.L."/>
            <person name="Gibbs R.A."/>
            <person name="Loomis W.F."/>
            <person name="Platzer M."/>
            <person name="Kay R.R."/>
            <person name="Williams J.G."/>
            <person name="Dear P.H."/>
            <person name="Noegel A.A."/>
            <person name="Barrell B.G."/>
            <person name="Kuspa A."/>
        </authorList>
    </citation>
    <scope>NUCLEOTIDE SEQUENCE [LARGE SCALE GENOMIC DNA]</scope>
    <source>
        <strain>AX4</strain>
    </source>
</reference>